<sequence>MVNTCTYLPLSGKVALVTGGGRGIGAGIALELARRGASVAINYGHSAKSAQEVVEAIQAIGRQAVAIQADLTCVPNIESLIQEVVRHFGRLDIVVSNSGMEKFKPLEETTLEDFNEVFNLNTRAQMFVARYAYDHIQPGGRVILMSSIAAGLGVPGHALYAGSKAAIEGFTRCLAADFGRKGCTVNAIAPAGVKSDMWRENAWRYAPGCDKSSSLEEIETALASGSPLKRCGVPEDIGKVVSFLASPDAEWVNGEFFSPPPCKGPLPGGDLEC</sequence>
<organism>
    <name type="scientific">Aspergillus fumigatus (strain ATCC MYA-4609 / CBS 101355 / FGSC A1100 / Af293)</name>
    <name type="common">Neosartorya fumigata</name>
    <dbReference type="NCBI Taxonomy" id="330879"/>
    <lineage>
        <taxon>Eukaryota</taxon>
        <taxon>Fungi</taxon>
        <taxon>Dikarya</taxon>
        <taxon>Ascomycota</taxon>
        <taxon>Pezizomycotina</taxon>
        <taxon>Eurotiomycetes</taxon>
        <taxon>Eurotiomycetidae</taxon>
        <taxon>Eurotiales</taxon>
        <taxon>Aspergillaceae</taxon>
        <taxon>Aspergillus</taxon>
        <taxon>Aspergillus subgen. Fumigati</taxon>
    </lineage>
</organism>
<evidence type="ECO:0000250" key="1">
    <source>
        <dbReference type="UniProtKB" id="L0E2Z4"/>
    </source>
</evidence>
<evidence type="ECO:0000250" key="2">
    <source>
        <dbReference type="UniProtKB" id="O93868"/>
    </source>
</evidence>
<evidence type="ECO:0000255" key="3">
    <source>
        <dbReference type="PROSITE-ProRule" id="PRU10001"/>
    </source>
</evidence>
<evidence type="ECO:0000269" key="4">
    <source>
    </source>
</evidence>
<evidence type="ECO:0000269" key="5">
    <source>
    </source>
</evidence>
<evidence type="ECO:0000269" key="6">
    <source>
    </source>
</evidence>
<evidence type="ECO:0000269" key="7">
    <source>
    </source>
</evidence>
<evidence type="ECO:0000269" key="8">
    <source>
    </source>
</evidence>
<evidence type="ECO:0000269" key="9">
    <source>
    </source>
</evidence>
<evidence type="ECO:0000269" key="10">
    <source>
    </source>
</evidence>
<evidence type="ECO:0000269" key="11">
    <source>
    </source>
</evidence>
<evidence type="ECO:0000269" key="12">
    <source>
    </source>
</evidence>
<evidence type="ECO:0000303" key="13">
    <source>
    </source>
</evidence>
<evidence type="ECO:0000303" key="14">
    <source>
    </source>
</evidence>
<evidence type="ECO:0000305" key="15"/>
<evidence type="ECO:0000305" key="16">
    <source>
    </source>
</evidence>
<reference key="1">
    <citation type="journal article" date="2005" name="Nature">
        <title>Genomic sequence of the pathogenic and allergenic filamentous fungus Aspergillus fumigatus.</title>
        <authorList>
            <person name="Nierman W.C."/>
            <person name="Pain A."/>
            <person name="Anderson M.J."/>
            <person name="Wortman J.R."/>
            <person name="Kim H.S."/>
            <person name="Arroyo J."/>
            <person name="Berriman M."/>
            <person name="Abe K."/>
            <person name="Archer D.B."/>
            <person name="Bermejo C."/>
            <person name="Bennett J.W."/>
            <person name="Bowyer P."/>
            <person name="Chen D."/>
            <person name="Collins M."/>
            <person name="Coulsen R."/>
            <person name="Davies R."/>
            <person name="Dyer P.S."/>
            <person name="Farman M.L."/>
            <person name="Fedorova N."/>
            <person name="Fedorova N.D."/>
            <person name="Feldblyum T.V."/>
            <person name="Fischer R."/>
            <person name="Fosker N."/>
            <person name="Fraser A."/>
            <person name="Garcia J.L."/>
            <person name="Garcia M.J."/>
            <person name="Goble A."/>
            <person name="Goldman G.H."/>
            <person name="Gomi K."/>
            <person name="Griffith-Jones S."/>
            <person name="Gwilliam R."/>
            <person name="Haas B.J."/>
            <person name="Haas H."/>
            <person name="Harris D.E."/>
            <person name="Horiuchi H."/>
            <person name="Huang J."/>
            <person name="Humphray S."/>
            <person name="Jimenez J."/>
            <person name="Keller N."/>
            <person name="Khouri H."/>
            <person name="Kitamoto K."/>
            <person name="Kobayashi T."/>
            <person name="Konzack S."/>
            <person name="Kulkarni R."/>
            <person name="Kumagai T."/>
            <person name="Lafton A."/>
            <person name="Latge J.-P."/>
            <person name="Li W."/>
            <person name="Lord A."/>
            <person name="Lu C."/>
            <person name="Majoros W.H."/>
            <person name="May G.S."/>
            <person name="Miller B.L."/>
            <person name="Mohamoud Y."/>
            <person name="Molina M."/>
            <person name="Monod M."/>
            <person name="Mouyna I."/>
            <person name="Mulligan S."/>
            <person name="Murphy L.D."/>
            <person name="O'Neil S."/>
            <person name="Paulsen I."/>
            <person name="Penalva M.A."/>
            <person name="Pertea M."/>
            <person name="Price C."/>
            <person name="Pritchard B.L."/>
            <person name="Quail M.A."/>
            <person name="Rabbinowitsch E."/>
            <person name="Rawlins N."/>
            <person name="Rajandream M.A."/>
            <person name="Reichard U."/>
            <person name="Renauld H."/>
            <person name="Robson G.D."/>
            <person name="Rodriguez de Cordoba S."/>
            <person name="Rodriguez-Pena J.M."/>
            <person name="Ronning C.M."/>
            <person name="Rutter S."/>
            <person name="Salzberg S.L."/>
            <person name="Sanchez M."/>
            <person name="Sanchez-Ferrero J.C."/>
            <person name="Saunders D."/>
            <person name="Seeger K."/>
            <person name="Squares R."/>
            <person name="Squares S."/>
            <person name="Takeuchi M."/>
            <person name="Tekaia F."/>
            <person name="Turner G."/>
            <person name="Vazquez de Aldana C.R."/>
            <person name="Weidman J."/>
            <person name="White O."/>
            <person name="Woodward J.R."/>
            <person name="Yu J.-H."/>
            <person name="Fraser C.M."/>
            <person name="Galagan J.E."/>
            <person name="Asai K."/>
            <person name="Machida M."/>
            <person name="Hall N."/>
            <person name="Barrell B.G."/>
            <person name="Denning D.W."/>
        </authorList>
    </citation>
    <scope>NUCLEOTIDE SEQUENCE [LARGE SCALE GENOMIC DNA]</scope>
    <source>
        <strain>ATCC MYA-4609 / CBS 101355 / FGSC A1100 / Af293</strain>
    </source>
</reference>
<reference key="2">
    <citation type="journal article" date="1999" name="J. Bacteriol.">
        <title>A developmentally regulated gene cluster involved in conidial pigment biosynthesis in Aspergillus fumigatus.</title>
        <authorList>
            <person name="Tsai H.F."/>
            <person name="Wheeler M.H."/>
            <person name="Chang Y.C."/>
            <person name="Kwon-Chung K.J."/>
        </authorList>
    </citation>
    <scope>FUNCTION</scope>
    <scope>DISRUPTION PHENOTYPE</scope>
</reference>
<reference key="3">
    <citation type="journal article" date="2009" name="BMC Microbiol.">
        <title>Melanin is an essential component for the integrity of the cell wall of Aspergillus fumigatus conidia.</title>
        <authorList>
            <person name="Pihet M."/>
            <person name="Vandeputte P."/>
            <person name="Tronchin G."/>
            <person name="Renier G."/>
            <person name="Saulnier P."/>
            <person name="Georgeault S."/>
            <person name="Mallet R."/>
            <person name="Chabasse D."/>
            <person name="Symoens F."/>
            <person name="Bouchara J.P."/>
        </authorList>
    </citation>
    <scope>FUNCTION</scope>
    <scope>ACTIVITY REGULATION</scope>
    <scope>DISRUPTION PHENOTYPE</scope>
</reference>
<reference key="4">
    <citation type="journal article" date="2009" name="PLoS ONE">
        <title>Conidiation color mutants of Aspergillus fumigatus are highly pathogenic to the heterologous insect host Galleria mellonella.</title>
        <authorList>
            <person name="Jackson J.C."/>
            <person name="Higgins L.A."/>
            <person name="Lin X."/>
        </authorList>
    </citation>
    <scope>FUNCTION</scope>
</reference>
<reference key="5">
    <citation type="journal article" date="2010" name="Antimicrob. Agents Chemother.">
        <title>Cutaneous model of invasive aspergillosis.</title>
        <authorList>
            <person name="Ben-Ami R."/>
            <person name="Lewis R.E."/>
            <person name="Leventakos K."/>
            <person name="Latge J.P."/>
            <person name="Kontoyiannis D.P."/>
        </authorList>
    </citation>
    <scope>FUNCTION</scope>
</reference>
<reference key="6">
    <citation type="journal article" date="2011" name="Front. Microbiol.">
        <title>Conidial dihydroxynaphthalene melanin of the human pathogenic fungus Aspergillus fumigatus interferes with the host endocytosis pathway.</title>
        <authorList>
            <person name="Thywissen A."/>
            <person name="Heinekamp T."/>
            <person name="Dahse H.M."/>
            <person name="Schmaler-Ripcke J."/>
            <person name="Nietzsche S."/>
            <person name="Zipfel P.F."/>
            <person name="Brakhage A.A."/>
        </authorList>
    </citation>
    <scope>FUNCTION</scope>
</reference>
<reference key="7">
    <citation type="journal article" date="2011" name="PLoS ONE">
        <title>Automated image analysis of the host-pathogen interaction between phagocytes and Aspergillus fumigatus.</title>
        <authorList>
            <person name="Mech F."/>
            <person name="Thywissen A."/>
            <person name="Guthke R."/>
            <person name="Brakhage A.A."/>
            <person name="Figge M.T."/>
        </authorList>
    </citation>
    <scope>FUNCTION</scope>
</reference>
<reference key="8">
    <citation type="journal article" date="2014" name="Infect. Immun.">
        <title>Surface structure characterization of Aspergillus fumigatus conidia mutated in the melanin synthesis pathway and their human cellular immune response.</title>
        <authorList>
            <person name="Bayry J."/>
            <person name="Beaussart A."/>
            <person name="Dufrene Y.F."/>
            <person name="Sharma M."/>
            <person name="Bansal K."/>
            <person name="Kniemeyer O."/>
            <person name="Aimanianda V."/>
            <person name="Brakhage A.A."/>
            <person name="Kaveri S.V."/>
            <person name="Kwon-Chung K.J."/>
            <person name="Latge J.P."/>
            <person name="Beauvais A."/>
        </authorList>
    </citation>
    <scope>FUNCTION</scope>
    <scope>DISRUPTION PHENOTYPE</scope>
</reference>
<reference key="9">
    <citation type="journal article" date="2015" name="Environ. Microbiol.">
        <title>Virulence determinants of the human pathogenic fungus Aspergillus fumigatus protect against soil amoeba predation.</title>
        <authorList>
            <person name="Hillmann F."/>
            <person name="Novohradska S."/>
            <person name="Mattern D.J."/>
            <person name="Forberger T."/>
            <person name="Heinekamp T."/>
            <person name="Westermann M."/>
            <person name="Winckler T."/>
            <person name="Brakhage A.A."/>
        </authorList>
    </citation>
    <scope>FUNCTION</scope>
</reference>
<reference key="10">
    <citation type="journal article" date="2016" name="Cell Rep.">
        <title>Subcellular compartmentalization and trafficking of the biosynthetic machinery for fungal melanin.</title>
        <authorList>
            <person name="Upadhyay S."/>
            <person name="Xu X."/>
            <person name="Lowry D."/>
            <person name="Jackson J.C."/>
            <person name="Roberson R.W."/>
            <person name="Lin X."/>
        </authorList>
    </citation>
    <scope>SUBCELLULAR LOCATION</scope>
    <scope>FUNCTION</scope>
    <scope>DISRUPTION PHENOTYPE</scope>
</reference>
<name>ARP2_ASPFU</name>
<comment type="function">
    <text evidence="4 5 6 7 8 9 10 11 12">Hydroxynaphthalene reductase; part of the gene cluster that mediates the biosynthesis of dihydroxynaphthalene (DHN)-melanin, a bluish-green pigment and a structural component of the conidial wall (PubMed:10515939, PubMed:19156203). The first step of the pathway is the production of the heptaketide naphtopyrone YWA1 by the polyketide synthase alb1 though condensation of acetyl-CoA with malonyl-CoA (PubMed:10515939). The naphtopyrone YWA1 is then converted to the pentaketide 1,3,6,8-tetrahydroxynaphthalene (1,3,6,8-THN) by the heptaketide hydrolyase ayg1 though chain-length shortening (PubMed:10515939). 1,3,6,8-THN is substrate of the hydroxynaphthalene reductase arp2 to yield scytalone (PubMed:10515939). The scytalone dehydratase arp1 then reduces scytalone to 1,3,8-THN (PubMed:10515939). 1,3,8-THN is also substrate of the hydroxynaphthalene reductase arp2 to yield vermelone (PubMed:10515939). Vermelone is further converted by the multicopper oxidase abr1 to 1,8-DHN (PubMed:10515939). Finally the laccase abr2 transforms 1,8-DHN to DHN-melanin (PubMed:10515939). DHN-melanin biosynthesis appears to be initiated in endosomes where early enzymes (abl1, ayg1, arp1 and arp2) localize, with exocytosis leading to melanin deposition on the cell surface where late enzymes (abr1 and abr2) localize (PubMed:26972005). DHN-melanin is an important structural component of the outer cell wall and is required for the presence of conidial surface hydrophobins (PubMed:19703288). DHN-melanin also plays a crucial role in fungal virulence, including a protective role against the host's immune defenses (PubMed:19156203, PubMed:20145078, PubMed:21573171, PubMed:21747802, PubMed:24818666). DHN-melanin also protects conidia against amoeba predation (PubMed:25684622).</text>
</comment>
<comment type="activity regulation">
    <text evidence="6">Tricyclazole and pyroquilon inhibit arp2 hydroxynaphtalene reductase activity (PubMed:19703288).</text>
</comment>
<comment type="pathway">
    <text evidence="4 5 6">Pigment biosynthesis; melanin biosynthesis.</text>
</comment>
<comment type="subcellular location">
    <subcellularLocation>
        <location evidence="12">Endosome</location>
    </subcellularLocation>
</comment>
<comment type="disruption phenotype">
    <text evidence="6 10 12">Results in brownish conidial phenotype (PubMed:19703288, PubMed:26972005). Results in an altered conidial surface with masked surface rodlet layer, leaky cell wall allowing the deposition of proteins on the cell surface and exposing the otherwise-masked cell wall polysaccharides at the surface (PubMed:24818666).</text>
</comment>
<comment type="similarity">
    <text evidence="15">Belongs to the short-chain dehydrogenases/reductases (SDR) family.</text>
</comment>
<keyword id="KW-0967">Endosome</keyword>
<keyword id="KW-0521">NADP</keyword>
<keyword id="KW-0560">Oxidoreductase</keyword>
<keyword id="KW-1185">Reference proteome</keyword>
<accession>E9QUT3</accession>
<protein>
    <recommendedName>
        <fullName evidence="14">Hydroxynaphthalene reductase arp2</fullName>
        <ecNumber evidence="16">1.1.-.-</ecNumber>
    </recommendedName>
    <alternativeName>
        <fullName evidence="15">Conidial pigment biosynthesis oxidase arp2</fullName>
    </alternativeName>
</protein>
<feature type="chain" id="PRO_0000436876" description="Hydroxynaphthalene reductase arp2">
    <location>
        <begin position="1"/>
        <end position="273"/>
    </location>
</feature>
<feature type="active site" description="Proton donor" evidence="2">
    <location>
        <position position="146"/>
    </location>
</feature>
<feature type="active site" description="Proton donor" evidence="2">
    <location>
        <position position="147"/>
    </location>
</feature>
<feature type="active site" description="Proton acceptor" evidence="3">
    <location>
        <position position="160"/>
    </location>
</feature>
<feature type="active site" description="Lowers pKa of active site Tyr" evidence="2">
    <location>
        <position position="164"/>
    </location>
</feature>
<feature type="binding site" evidence="1">
    <location>
        <position position="24"/>
    </location>
    <ligand>
        <name>NADP(+)</name>
        <dbReference type="ChEBI" id="CHEBI:58349"/>
    </ligand>
</feature>
<feature type="binding site" evidence="1">
    <location>
        <position position="70"/>
    </location>
    <ligand>
        <name>NADP(+)</name>
        <dbReference type="ChEBI" id="CHEBI:58349"/>
    </ligand>
</feature>
<feature type="binding site" evidence="2">
    <location>
        <position position="97"/>
    </location>
    <ligand>
        <name>NADP(+)</name>
        <dbReference type="ChEBI" id="CHEBI:58349"/>
    </ligand>
</feature>
<feature type="binding site" evidence="1">
    <location>
        <position position="130"/>
    </location>
    <ligand>
        <name>NADP(+)</name>
        <dbReference type="ChEBI" id="CHEBI:58349"/>
    </ligand>
</feature>
<feature type="binding site" evidence="2">
    <location>
        <position position="160"/>
    </location>
    <ligand>
        <name>NADP(+)</name>
        <dbReference type="ChEBI" id="CHEBI:58349"/>
    </ligand>
</feature>
<feature type="binding site" evidence="2">
    <location>
        <position position="164"/>
    </location>
    <ligand>
        <name>NADP(+)</name>
        <dbReference type="ChEBI" id="CHEBI:58349"/>
    </ligand>
</feature>
<feature type="binding site" evidence="2">
    <location>
        <position position="193"/>
    </location>
    <ligand>
        <name>NADP(+)</name>
        <dbReference type="ChEBI" id="CHEBI:58349"/>
    </ligand>
</feature>
<feature type="binding site" evidence="1">
    <location>
        <position position="195"/>
    </location>
    <ligand>
        <name>NADP(+)</name>
        <dbReference type="ChEBI" id="CHEBI:58349"/>
    </ligand>
</feature>
<proteinExistence type="inferred from homology"/>
<dbReference type="EC" id="1.1.-.-" evidence="16"/>
<dbReference type="EMBL" id="AAHF01000001">
    <property type="protein sequence ID" value="EAL94053.1"/>
    <property type="molecule type" value="Genomic_DNA"/>
</dbReference>
<dbReference type="RefSeq" id="XP_756091.1">
    <property type="nucleotide sequence ID" value="XM_750998.1"/>
</dbReference>
<dbReference type="SMR" id="E9QUT3"/>
<dbReference type="STRING" id="330879.E9QUT3"/>
<dbReference type="SwissPalm" id="E9QUT3"/>
<dbReference type="EnsemblFungi" id="EAL94053">
    <property type="protein sequence ID" value="EAL94053"/>
    <property type="gene ID" value="AFUA_2G17560"/>
</dbReference>
<dbReference type="GeneID" id="3513287"/>
<dbReference type="KEGG" id="afm:AFUA_2G17560"/>
<dbReference type="VEuPathDB" id="FungiDB:Afu2g17560"/>
<dbReference type="eggNOG" id="KOG0725">
    <property type="taxonomic scope" value="Eukaryota"/>
</dbReference>
<dbReference type="HOGENOM" id="CLU_010194_1_3_1"/>
<dbReference type="InParanoid" id="E9QUT3"/>
<dbReference type="OMA" id="CQKHMVD"/>
<dbReference type="OrthoDB" id="47007at2759"/>
<dbReference type="UniPathway" id="UPA00785"/>
<dbReference type="Proteomes" id="UP000002530">
    <property type="component" value="Chromosome 2"/>
</dbReference>
<dbReference type="GO" id="GO:0005768">
    <property type="term" value="C:endosome"/>
    <property type="evidence" value="ECO:0007669"/>
    <property type="project" value="UniProtKB-SubCell"/>
</dbReference>
<dbReference type="GO" id="GO:0047039">
    <property type="term" value="F:tetrahydroxynaphthalene reductase activity"/>
    <property type="evidence" value="ECO:0000315"/>
    <property type="project" value="AspGD"/>
</dbReference>
<dbReference type="GO" id="GO:0042438">
    <property type="term" value="P:melanin biosynthetic process"/>
    <property type="evidence" value="ECO:0000315"/>
    <property type="project" value="AspGD"/>
</dbReference>
<dbReference type="GO" id="GO:0046148">
    <property type="term" value="P:pigment biosynthetic process"/>
    <property type="evidence" value="ECO:0000315"/>
    <property type="project" value="AspGD"/>
</dbReference>
<dbReference type="FunFam" id="3.40.50.720:FF:000084">
    <property type="entry name" value="Short-chain dehydrogenase reductase"/>
    <property type="match status" value="1"/>
</dbReference>
<dbReference type="Gene3D" id="3.40.50.720">
    <property type="entry name" value="NAD(P)-binding Rossmann-like Domain"/>
    <property type="match status" value="1"/>
</dbReference>
<dbReference type="InterPro" id="IPR036291">
    <property type="entry name" value="NAD(P)-bd_dom_sf"/>
</dbReference>
<dbReference type="InterPro" id="IPR020904">
    <property type="entry name" value="Sc_DH/Rdtase_CS"/>
</dbReference>
<dbReference type="InterPro" id="IPR002347">
    <property type="entry name" value="SDR_fam"/>
</dbReference>
<dbReference type="PANTHER" id="PTHR43639">
    <property type="entry name" value="OXIDOREDUCTASE, SHORT-CHAIN DEHYDROGENASE/REDUCTASE FAMILY (AFU_ORTHOLOGUE AFUA_5G02870)"/>
    <property type="match status" value="1"/>
</dbReference>
<dbReference type="PANTHER" id="PTHR43639:SF1">
    <property type="entry name" value="SHORT-CHAIN DEHYDROGENASE_REDUCTASE FAMILY PROTEIN"/>
    <property type="match status" value="1"/>
</dbReference>
<dbReference type="Pfam" id="PF13561">
    <property type="entry name" value="adh_short_C2"/>
    <property type="match status" value="1"/>
</dbReference>
<dbReference type="PRINTS" id="PR00081">
    <property type="entry name" value="GDHRDH"/>
</dbReference>
<dbReference type="PRINTS" id="PR00080">
    <property type="entry name" value="SDRFAMILY"/>
</dbReference>
<dbReference type="SMART" id="SM00822">
    <property type="entry name" value="PKS_KR"/>
    <property type="match status" value="1"/>
</dbReference>
<dbReference type="SUPFAM" id="SSF51735">
    <property type="entry name" value="NAD(P)-binding Rossmann-fold domains"/>
    <property type="match status" value="1"/>
</dbReference>
<dbReference type="PROSITE" id="PS00061">
    <property type="entry name" value="ADH_SHORT"/>
    <property type="match status" value="1"/>
</dbReference>
<gene>
    <name evidence="13" type="primary">arp2</name>
    <name type="ORF">AFUA_2G17560</name>
</gene>